<protein>
    <recommendedName>
        <fullName evidence="1">Co-chaperonin GroES</fullName>
    </recommendedName>
    <alternativeName>
        <fullName evidence="1">10 kDa chaperonin</fullName>
    </alternativeName>
    <alternativeName>
        <fullName evidence="1">Chaperonin-10</fullName>
        <shortName evidence="1">Cpn10</shortName>
    </alternativeName>
</protein>
<gene>
    <name evidence="1" type="primary">groES</name>
    <name evidence="1" type="synonym">groS</name>
    <name type="ordered locus">ETA_29840</name>
</gene>
<evidence type="ECO:0000255" key="1">
    <source>
        <dbReference type="HAMAP-Rule" id="MF_00580"/>
    </source>
</evidence>
<name>CH10_ERWT9</name>
<comment type="function">
    <text evidence="1">Together with the chaperonin GroEL, plays an essential role in assisting protein folding. The GroEL-GroES system forms a nano-cage that allows encapsulation of the non-native substrate proteins and provides a physical environment optimized to promote and accelerate protein folding. GroES binds to the apical surface of the GroEL ring, thereby capping the opening of the GroEL channel.</text>
</comment>
<comment type="subunit">
    <text evidence="1">Heptamer of 7 subunits arranged in a ring. Interacts with the chaperonin GroEL.</text>
</comment>
<comment type="subcellular location">
    <subcellularLocation>
        <location evidence="1">Cytoplasm</location>
    </subcellularLocation>
</comment>
<comment type="similarity">
    <text evidence="1">Belongs to the GroES chaperonin family.</text>
</comment>
<reference key="1">
    <citation type="journal article" date="2008" name="Environ. Microbiol.">
        <title>The genome of Erwinia tasmaniensis strain Et1/99, a non-pathogenic bacterium in the genus Erwinia.</title>
        <authorList>
            <person name="Kube M."/>
            <person name="Migdoll A.M."/>
            <person name="Mueller I."/>
            <person name="Kuhl H."/>
            <person name="Beck A."/>
            <person name="Reinhardt R."/>
            <person name="Geider K."/>
        </authorList>
    </citation>
    <scope>NUCLEOTIDE SEQUENCE [LARGE SCALE GENOMIC DNA]</scope>
    <source>
        <strain>DSM 17950 / CFBP 7177 / CIP 109463 / NCPPB 4357 / Et1/99</strain>
    </source>
</reference>
<dbReference type="EMBL" id="CU468135">
    <property type="protein sequence ID" value="CAO98030.1"/>
    <property type="molecule type" value="Genomic_DNA"/>
</dbReference>
<dbReference type="RefSeq" id="WP_012442682.1">
    <property type="nucleotide sequence ID" value="NC_010694.1"/>
</dbReference>
<dbReference type="SMR" id="B2VL85"/>
<dbReference type="STRING" id="465817.ETA_29840"/>
<dbReference type="KEGG" id="eta:ETA_29840"/>
<dbReference type="eggNOG" id="COG0234">
    <property type="taxonomic scope" value="Bacteria"/>
</dbReference>
<dbReference type="HOGENOM" id="CLU_132825_1_1_6"/>
<dbReference type="OrthoDB" id="9806791at2"/>
<dbReference type="Proteomes" id="UP000001726">
    <property type="component" value="Chromosome"/>
</dbReference>
<dbReference type="GO" id="GO:0005737">
    <property type="term" value="C:cytoplasm"/>
    <property type="evidence" value="ECO:0007669"/>
    <property type="project" value="UniProtKB-SubCell"/>
</dbReference>
<dbReference type="GO" id="GO:0005524">
    <property type="term" value="F:ATP binding"/>
    <property type="evidence" value="ECO:0007669"/>
    <property type="project" value="InterPro"/>
</dbReference>
<dbReference type="GO" id="GO:0046872">
    <property type="term" value="F:metal ion binding"/>
    <property type="evidence" value="ECO:0007669"/>
    <property type="project" value="TreeGrafter"/>
</dbReference>
<dbReference type="GO" id="GO:0044183">
    <property type="term" value="F:protein folding chaperone"/>
    <property type="evidence" value="ECO:0007669"/>
    <property type="project" value="InterPro"/>
</dbReference>
<dbReference type="GO" id="GO:0051087">
    <property type="term" value="F:protein-folding chaperone binding"/>
    <property type="evidence" value="ECO:0007669"/>
    <property type="project" value="TreeGrafter"/>
</dbReference>
<dbReference type="GO" id="GO:0051082">
    <property type="term" value="F:unfolded protein binding"/>
    <property type="evidence" value="ECO:0007669"/>
    <property type="project" value="TreeGrafter"/>
</dbReference>
<dbReference type="GO" id="GO:0051085">
    <property type="term" value="P:chaperone cofactor-dependent protein refolding"/>
    <property type="evidence" value="ECO:0007669"/>
    <property type="project" value="TreeGrafter"/>
</dbReference>
<dbReference type="CDD" id="cd00320">
    <property type="entry name" value="cpn10"/>
    <property type="match status" value="1"/>
</dbReference>
<dbReference type="FunFam" id="2.30.33.40:FF:000001">
    <property type="entry name" value="10 kDa chaperonin"/>
    <property type="match status" value="1"/>
</dbReference>
<dbReference type="Gene3D" id="2.30.33.40">
    <property type="entry name" value="GroES chaperonin"/>
    <property type="match status" value="1"/>
</dbReference>
<dbReference type="HAMAP" id="MF_00580">
    <property type="entry name" value="CH10"/>
    <property type="match status" value="1"/>
</dbReference>
<dbReference type="InterPro" id="IPR020818">
    <property type="entry name" value="Chaperonin_GroES"/>
</dbReference>
<dbReference type="InterPro" id="IPR037124">
    <property type="entry name" value="Chaperonin_GroES_sf"/>
</dbReference>
<dbReference type="InterPro" id="IPR018369">
    <property type="entry name" value="Chaprnonin_Cpn10_CS"/>
</dbReference>
<dbReference type="InterPro" id="IPR011032">
    <property type="entry name" value="GroES-like_sf"/>
</dbReference>
<dbReference type="NCBIfam" id="NF001526">
    <property type="entry name" value="PRK00364.1-1"/>
    <property type="match status" value="1"/>
</dbReference>
<dbReference type="NCBIfam" id="NF001527">
    <property type="entry name" value="PRK00364.1-2"/>
    <property type="match status" value="1"/>
</dbReference>
<dbReference type="NCBIfam" id="NF001531">
    <property type="entry name" value="PRK00364.2-2"/>
    <property type="match status" value="1"/>
</dbReference>
<dbReference type="PANTHER" id="PTHR10772">
    <property type="entry name" value="10 KDA HEAT SHOCK PROTEIN"/>
    <property type="match status" value="1"/>
</dbReference>
<dbReference type="PANTHER" id="PTHR10772:SF58">
    <property type="entry name" value="CO-CHAPERONIN GROES"/>
    <property type="match status" value="1"/>
</dbReference>
<dbReference type="Pfam" id="PF00166">
    <property type="entry name" value="Cpn10"/>
    <property type="match status" value="1"/>
</dbReference>
<dbReference type="PRINTS" id="PR00297">
    <property type="entry name" value="CHAPERONIN10"/>
</dbReference>
<dbReference type="SMART" id="SM00883">
    <property type="entry name" value="Cpn10"/>
    <property type="match status" value="1"/>
</dbReference>
<dbReference type="SUPFAM" id="SSF50129">
    <property type="entry name" value="GroES-like"/>
    <property type="match status" value="1"/>
</dbReference>
<dbReference type="PROSITE" id="PS00681">
    <property type="entry name" value="CHAPERONINS_CPN10"/>
    <property type="match status" value="1"/>
</dbReference>
<feature type="chain" id="PRO_1000129660" description="Co-chaperonin GroES">
    <location>
        <begin position="1"/>
        <end position="97"/>
    </location>
</feature>
<sequence>MKIRPLHDRVIVKRKEVESKSAGGIVLTGSAAGKSTRGEVLAVGNGRILESGDVKPLDVKVGDVVIFSEGYGAKTEKIDNQEVLIISESDILAIVEA</sequence>
<proteinExistence type="inferred from homology"/>
<accession>B2VL85</accession>
<keyword id="KW-0143">Chaperone</keyword>
<keyword id="KW-0963">Cytoplasm</keyword>
<keyword id="KW-1185">Reference proteome</keyword>
<organism>
    <name type="scientific">Erwinia tasmaniensis (strain DSM 17950 / CFBP 7177 / CIP 109463 / NCPPB 4357 / Et1/99)</name>
    <dbReference type="NCBI Taxonomy" id="465817"/>
    <lineage>
        <taxon>Bacteria</taxon>
        <taxon>Pseudomonadati</taxon>
        <taxon>Pseudomonadota</taxon>
        <taxon>Gammaproteobacteria</taxon>
        <taxon>Enterobacterales</taxon>
        <taxon>Erwiniaceae</taxon>
        <taxon>Erwinia</taxon>
    </lineage>
</organism>